<comment type="function">
    <text evidence="1">One of the primary rRNA binding proteins, it binds directly to 16S rRNA where it nucleates assembly of the body of the 30S subunit.</text>
</comment>
<comment type="function">
    <text evidence="1">With S5 and S12 plays an important role in translational accuracy.</text>
</comment>
<comment type="subunit">
    <text evidence="1">Part of the 30S ribosomal subunit. Contacts protein S5. The interaction surface between S4 and S5 is involved in control of translational fidelity.</text>
</comment>
<comment type="similarity">
    <text evidence="1">Belongs to the universal ribosomal protein uS4 family.</text>
</comment>
<organism>
    <name type="scientific">Leptothrix cholodnii (strain ATCC 51168 / LMG 8142 / SP-6)</name>
    <name type="common">Leptothrix discophora (strain SP-6)</name>
    <dbReference type="NCBI Taxonomy" id="395495"/>
    <lineage>
        <taxon>Bacteria</taxon>
        <taxon>Pseudomonadati</taxon>
        <taxon>Pseudomonadota</taxon>
        <taxon>Betaproteobacteria</taxon>
        <taxon>Burkholderiales</taxon>
        <taxon>Sphaerotilaceae</taxon>
        <taxon>Leptothrix</taxon>
    </lineage>
</organism>
<feature type="chain" id="PRO_1000140753" description="Small ribosomal subunit protein uS4">
    <location>
        <begin position="1"/>
        <end position="207"/>
    </location>
</feature>
<feature type="domain" description="S4 RNA-binding" evidence="1">
    <location>
        <begin position="97"/>
        <end position="157"/>
    </location>
</feature>
<feature type="region of interest" description="Disordered" evidence="2">
    <location>
        <begin position="22"/>
        <end position="54"/>
    </location>
</feature>
<feature type="compositionally biased region" description="Basic and acidic residues" evidence="2">
    <location>
        <begin position="27"/>
        <end position="38"/>
    </location>
</feature>
<feature type="compositionally biased region" description="Polar residues" evidence="2">
    <location>
        <begin position="42"/>
        <end position="52"/>
    </location>
</feature>
<evidence type="ECO:0000255" key="1">
    <source>
        <dbReference type="HAMAP-Rule" id="MF_01306"/>
    </source>
</evidence>
<evidence type="ECO:0000256" key="2">
    <source>
        <dbReference type="SAM" id="MobiDB-lite"/>
    </source>
</evidence>
<evidence type="ECO:0000305" key="3"/>
<name>RS4_LEPCP</name>
<accession>B1Y7N0</accession>
<sequence>MARYLGPKAKLARREGTDLYLKSARRSISDKSKFESKPGQHGRTSGSRTSDFGLQLREKQKVKRMYGVLEKQFRRYFAEADRRKGNTGANLLLLLESRLDNVVYRMGFGSTRAEARQLVSHKAVTVNGQSVNIPSYLVKAGDVISVREKSKKQLRIIDALKLADSIGLPAWVSVDLTKMEGIFKKAPDRDEFGAEINESLIVELYSR</sequence>
<proteinExistence type="inferred from homology"/>
<gene>
    <name evidence="1" type="primary">rpsD</name>
    <name type="ordered locus">Lcho_3924</name>
</gene>
<reference key="1">
    <citation type="submission" date="2008-03" db="EMBL/GenBank/DDBJ databases">
        <title>Complete sequence of Leptothrix cholodnii SP-6.</title>
        <authorList>
            <consortium name="US DOE Joint Genome Institute"/>
            <person name="Copeland A."/>
            <person name="Lucas S."/>
            <person name="Lapidus A."/>
            <person name="Glavina del Rio T."/>
            <person name="Dalin E."/>
            <person name="Tice H."/>
            <person name="Bruce D."/>
            <person name="Goodwin L."/>
            <person name="Pitluck S."/>
            <person name="Chertkov O."/>
            <person name="Brettin T."/>
            <person name="Detter J.C."/>
            <person name="Han C."/>
            <person name="Kuske C.R."/>
            <person name="Schmutz J."/>
            <person name="Larimer F."/>
            <person name="Land M."/>
            <person name="Hauser L."/>
            <person name="Kyrpides N."/>
            <person name="Lykidis A."/>
            <person name="Emerson D."/>
            <person name="Richardson P."/>
        </authorList>
    </citation>
    <scope>NUCLEOTIDE SEQUENCE [LARGE SCALE GENOMIC DNA]</scope>
    <source>
        <strain>ATCC 51168 / LMG 8142 / SP-6</strain>
    </source>
</reference>
<keyword id="KW-1185">Reference proteome</keyword>
<keyword id="KW-0687">Ribonucleoprotein</keyword>
<keyword id="KW-0689">Ribosomal protein</keyword>
<keyword id="KW-0694">RNA-binding</keyword>
<keyword id="KW-0699">rRNA-binding</keyword>
<protein>
    <recommendedName>
        <fullName evidence="1">Small ribosomal subunit protein uS4</fullName>
    </recommendedName>
    <alternativeName>
        <fullName evidence="3">30S ribosomal protein S4</fullName>
    </alternativeName>
</protein>
<dbReference type="EMBL" id="CP001013">
    <property type="protein sequence ID" value="ACB36178.1"/>
    <property type="molecule type" value="Genomic_DNA"/>
</dbReference>
<dbReference type="RefSeq" id="WP_012348924.1">
    <property type="nucleotide sequence ID" value="NC_010524.1"/>
</dbReference>
<dbReference type="SMR" id="B1Y7N0"/>
<dbReference type="STRING" id="395495.Lcho_3924"/>
<dbReference type="KEGG" id="lch:Lcho_3924"/>
<dbReference type="eggNOG" id="COG0522">
    <property type="taxonomic scope" value="Bacteria"/>
</dbReference>
<dbReference type="HOGENOM" id="CLU_092403_0_2_4"/>
<dbReference type="OrthoDB" id="9803672at2"/>
<dbReference type="Proteomes" id="UP000001693">
    <property type="component" value="Chromosome"/>
</dbReference>
<dbReference type="GO" id="GO:0015935">
    <property type="term" value="C:small ribosomal subunit"/>
    <property type="evidence" value="ECO:0007669"/>
    <property type="project" value="InterPro"/>
</dbReference>
<dbReference type="GO" id="GO:0019843">
    <property type="term" value="F:rRNA binding"/>
    <property type="evidence" value="ECO:0007669"/>
    <property type="project" value="UniProtKB-UniRule"/>
</dbReference>
<dbReference type="GO" id="GO:0003735">
    <property type="term" value="F:structural constituent of ribosome"/>
    <property type="evidence" value="ECO:0007669"/>
    <property type="project" value="InterPro"/>
</dbReference>
<dbReference type="GO" id="GO:0042274">
    <property type="term" value="P:ribosomal small subunit biogenesis"/>
    <property type="evidence" value="ECO:0007669"/>
    <property type="project" value="TreeGrafter"/>
</dbReference>
<dbReference type="GO" id="GO:0006412">
    <property type="term" value="P:translation"/>
    <property type="evidence" value="ECO:0007669"/>
    <property type="project" value="UniProtKB-UniRule"/>
</dbReference>
<dbReference type="CDD" id="cd00165">
    <property type="entry name" value="S4"/>
    <property type="match status" value="1"/>
</dbReference>
<dbReference type="FunFam" id="1.10.1050.10:FF:000001">
    <property type="entry name" value="30S ribosomal protein S4"/>
    <property type="match status" value="1"/>
</dbReference>
<dbReference type="FunFam" id="3.10.290.10:FF:000001">
    <property type="entry name" value="30S ribosomal protein S4"/>
    <property type="match status" value="1"/>
</dbReference>
<dbReference type="Gene3D" id="1.10.1050.10">
    <property type="entry name" value="Ribosomal Protein S4 Delta 41, Chain A, domain 1"/>
    <property type="match status" value="1"/>
</dbReference>
<dbReference type="Gene3D" id="3.10.290.10">
    <property type="entry name" value="RNA-binding S4 domain"/>
    <property type="match status" value="1"/>
</dbReference>
<dbReference type="HAMAP" id="MF_01306_B">
    <property type="entry name" value="Ribosomal_uS4_B"/>
    <property type="match status" value="1"/>
</dbReference>
<dbReference type="InterPro" id="IPR022801">
    <property type="entry name" value="Ribosomal_uS4"/>
</dbReference>
<dbReference type="InterPro" id="IPR005709">
    <property type="entry name" value="Ribosomal_uS4_bac-type"/>
</dbReference>
<dbReference type="InterPro" id="IPR018079">
    <property type="entry name" value="Ribosomal_uS4_CS"/>
</dbReference>
<dbReference type="InterPro" id="IPR001912">
    <property type="entry name" value="Ribosomal_uS4_N"/>
</dbReference>
<dbReference type="InterPro" id="IPR002942">
    <property type="entry name" value="S4_RNA-bd"/>
</dbReference>
<dbReference type="InterPro" id="IPR036986">
    <property type="entry name" value="S4_RNA-bd_sf"/>
</dbReference>
<dbReference type="NCBIfam" id="NF003717">
    <property type="entry name" value="PRK05327.1"/>
    <property type="match status" value="1"/>
</dbReference>
<dbReference type="NCBIfam" id="TIGR01017">
    <property type="entry name" value="rpsD_bact"/>
    <property type="match status" value="1"/>
</dbReference>
<dbReference type="PANTHER" id="PTHR11831">
    <property type="entry name" value="30S 40S RIBOSOMAL PROTEIN"/>
    <property type="match status" value="1"/>
</dbReference>
<dbReference type="PANTHER" id="PTHR11831:SF4">
    <property type="entry name" value="SMALL RIBOSOMAL SUBUNIT PROTEIN US4M"/>
    <property type="match status" value="1"/>
</dbReference>
<dbReference type="Pfam" id="PF00163">
    <property type="entry name" value="Ribosomal_S4"/>
    <property type="match status" value="1"/>
</dbReference>
<dbReference type="Pfam" id="PF01479">
    <property type="entry name" value="S4"/>
    <property type="match status" value="1"/>
</dbReference>
<dbReference type="SMART" id="SM01390">
    <property type="entry name" value="Ribosomal_S4"/>
    <property type="match status" value="1"/>
</dbReference>
<dbReference type="SMART" id="SM00363">
    <property type="entry name" value="S4"/>
    <property type="match status" value="1"/>
</dbReference>
<dbReference type="SUPFAM" id="SSF55174">
    <property type="entry name" value="Alpha-L RNA-binding motif"/>
    <property type="match status" value="1"/>
</dbReference>
<dbReference type="PROSITE" id="PS00632">
    <property type="entry name" value="RIBOSOMAL_S4"/>
    <property type="match status" value="1"/>
</dbReference>
<dbReference type="PROSITE" id="PS50889">
    <property type="entry name" value="S4"/>
    <property type="match status" value="1"/>
</dbReference>